<proteinExistence type="evidence at protein level"/>
<protein>
    <recommendedName>
        <fullName evidence="3">Caerulein precursor fragment R8</fullName>
    </recommendedName>
    <alternativeName>
        <fullName evidence="3">CPF-R8</fullName>
    </alternativeName>
</protein>
<organism evidence="3">
    <name type="scientific">Xenopus ruwenzoriensis</name>
    <name type="common">Uganda clawed frog</name>
    <dbReference type="NCBI Taxonomy" id="105430"/>
    <lineage>
        <taxon>Eukaryota</taxon>
        <taxon>Metazoa</taxon>
        <taxon>Chordata</taxon>
        <taxon>Craniata</taxon>
        <taxon>Vertebrata</taxon>
        <taxon>Euteleostomi</taxon>
        <taxon>Amphibia</taxon>
        <taxon>Batrachia</taxon>
        <taxon>Anura</taxon>
        <taxon>Pipoidea</taxon>
        <taxon>Pipidae</taxon>
        <taxon>Xenopodinae</taxon>
        <taxon>Xenopus</taxon>
        <taxon>Xenopus</taxon>
    </lineage>
</organism>
<name>CPFR8_XENRU</name>
<sequence length="27" mass="2660">GFASFLGKALKAALKIGANMLGGAPQQ</sequence>
<feature type="peptide" id="PRO_0000440918" description="Caerulein precursor fragment R8" evidence="2">
    <location>
        <begin position="1"/>
        <end position="27"/>
    </location>
</feature>
<reference evidence="4" key="1">
    <citation type="journal article" date="2016" name="Comp. Biochem. Physiol.">
        <title>Peptidomic analysis of the extensive array of host-defense peptides in skin secretions of the dodecaploid frog Xenopus ruwenzoriensis (Pipidae).</title>
        <authorList>
            <person name="Coquet L."/>
            <person name="Kolodziejek J."/>
            <person name="Jouenne T."/>
            <person name="Nowotny N."/>
            <person name="King J.D."/>
            <person name="Conlon J.M."/>
        </authorList>
    </citation>
    <scope>PROTEIN SEQUENCE</scope>
    <scope>SUBCELLULAR LOCATION</scope>
    <scope>MASS SPECTROMETRY</scope>
    <source>
        <tissue evidence="3">Skin secretion</tissue>
    </source>
</reference>
<dbReference type="GO" id="GO:0005576">
    <property type="term" value="C:extracellular region"/>
    <property type="evidence" value="ECO:0007669"/>
    <property type="project" value="UniProtKB-SubCell"/>
</dbReference>
<dbReference type="GO" id="GO:0006952">
    <property type="term" value="P:defense response"/>
    <property type="evidence" value="ECO:0007669"/>
    <property type="project" value="UniProtKB-KW"/>
</dbReference>
<evidence type="ECO:0000250" key="1">
    <source>
        <dbReference type="UniProtKB" id="C0HK89"/>
    </source>
</evidence>
<evidence type="ECO:0000269" key="2">
    <source>
    </source>
</evidence>
<evidence type="ECO:0000303" key="3">
    <source>
    </source>
</evidence>
<evidence type="ECO:0000305" key="4"/>
<evidence type="ECO:0000305" key="5">
    <source>
    </source>
</evidence>
<comment type="function">
    <text evidence="1">Antimicrobial peptide.</text>
</comment>
<comment type="subcellular location">
    <subcellularLocation>
        <location evidence="2">Secreted</location>
    </subcellularLocation>
</comment>
<comment type="tissue specificity">
    <text evidence="5">Expressed by the skin glands.</text>
</comment>
<comment type="mass spectrometry" mass="2659.6" method="MALDI" evidence="2"/>
<comment type="similarity">
    <text evidence="4">Belongs to the gastrin/cholecystokinin family.</text>
</comment>
<accession>C0HKN2</accession>
<keyword id="KW-0878">Amphibian defense peptide</keyword>
<keyword id="KW-0929">Antimicrobial</keyword>
<keyword id="KW-0903">Direct protein sequencing</keyword>
<keyword id="KW-0964">Secreted</keyword>